<keyword id="KW-0007">Acetylation</keyword>
<keyword id="KW-0012">Acyltransferase</keyword>
<keyword id="KW-0903">Direct protein sequencing</keyword>
<keyword id="KW-0496">Mitochondrion</keyword>
<keyword id="KW-0539">Nucleus</keyword>
<keyword id="KW-0663">Pyridoxal phosphate</keyword>
<keyword id="KW-1185">Reference proteome</keyword>
<keyword id="KW-0808">Transferase</keyword>
<keyword id="KW-0809">Transit peptide</keyword>
<sequence>MWAGRVLHAALSRAPRESRAQSALAQLRGILEEELESIRGAGTWKSERVITSRQGPHIHVDGAPGGIINFCANNYLGLSSHPEVIQAGLRTLKEFGAGLSSVRFICGTQSIHKDLEAKIARFHQREDAILYPSCFDANTGLFEALLTSEDAVLSDELNHASIIDGIRLCKAHKYRYRHLDMADLEAKLQEAQKHRLRLVATDGAFSMDGDIAPLQEICRLASQYGALVFVDESHATGFLGATGRGTDELLGVMDQVTIINSTLGKALGGASGGYTTGPGALVSLLRQRARPYLFSNSLPPAAVGCASKALDLLMESNAIVQSMAAKTLRFRSQMEAAGFTISGANHPICPVMLGDARLALNIADDMLKRGIFVIGFSYPVVPKGKARIRVQISAVHSEEDIDRCVEAFVEVGRLHGALP</sequence>
<organism>
    <name type="scientific">Bos taurus</name>
    <name type="common">Bovine</name>
    <dbReference type="NCBI Taxonomy" id="9913"/>
    <lineage>
        <taxon>Eukaryota</taxon>
        <taxon>Metazoa</taxon>
        <taxon>Chordata</taxon>
        <taxon>Craniata</taxon>
        <taxon>Vertebrata</taxon>
        <taxon>Euteleostomi</taxon>
        <taxon>Mammalia</taxon>
        <taxon>Eutheria</taxon>
        <taxon>Laurasiatheria</taxon>
        <taxon>Artiodactyla</taxon>
        <taxon>Ruminantia</taxon>
        <taxon>Pecora</taxon>
        <taxon>Bovidae</taxon>
        <taxon>Bovinae</taxon>
        <taxon>Bos</taxon>
    </lineage>
</organism>
<evidence type="ECO:0000250" key="1">
    <source>
        <dbReference type="UniProtKB" id="O75600"/>
    </source>
</evidence>
<evidence type="ECO:0000250" key="2">
    <source>
        <dbReference type="UniProtKB" id="O88986"/>
    </source>
</evidence>
<evidence type="ECO:0000250" key="3">
    <source>
        <dbReference type="UniProtKB" id="P0AB77"/>
    </source>
</evidence>
<evidence type="ECO:0000269" key="4">
    <source>
    </source>
</evidence>
<evidence type="ECO:0000303" key="5">
    <source>
    </source>
</evidence>
<evidence type="ECO:0000305" key="6"/>
<evidence type="ECO:0000305" key="7">
    <source>
    </source>
</evidence>
<protein>
    <recommendedName>
        <fullName>2-amino-3-ketobutyrate coenzyme A ligase, mitochondrial</fullName>
        <shortName>AKB ligase</shortName>
        <ecNumber evidence="4">2.3.1.29</ecNumber>
    </recommendedName>
    <alternativeName>
        <fullName>Aminoacetone synthase</fullName>
    </alternativeName>
    <alternativeName>
        <fullName>Glycine acetyltransferase</fullName>
    </alternativeName>
</protein>
<comment type="function">
    <text evidence="4">Pyridoxal phosphate (PLP) dependent enzyme, which catalyzes the cleavage of 2-amino-3-oxobutanoate to glycine and acetyl-CoA. Catalyzes the second reaction step on the main metabolic degradation pathway for L-threonine.</text>
</comment>
<comment type="catalytic activity">
    <reaction evidence="4">
        <text>glycine + acetyl-CoA = (2S)-2-amino-3-oxobutanoate + CoA</text>
        <dbReference type="Rhea" id="RHEA:20736"/>
        <dbReference type="ChEBI" id="CHEBI:57287"/>
        <dbReference type="ChEBI" id="CHEBI:57288"/>
        <dbReference type="ChEBI" id="CHEBI:57305"/>
        <dbReference type="ChEBI" id="CHEBI:78948"/>
        <dbReference type="EC" id="2.3.1.29"/>
    </reaction>
    <physiologicalReaction direction="right-to-left" evidence="7">
        <dbReference type="Rhea" id="RHEA:20738"/>
    </physiologicalReaction>
</comment>
<comment type="cofactor">
    <cofactor evidence="4">
        <name>pyridoxal 5'-phosphate</name>
        <dbReference type="ChEBI" id="CHEBI:597326"/>
    </cofactor>
</comment>
<comment type="pathway">
    <text>Amino-acid degradation; L-threonine degradation via oxydo-reductase pathway; glycine from L-threonine: step 2/2.</text>
</comment>
<comment type="subcellular location">
    <subcellularLocation>
        <location evidence="4">Mitochondrion</location>
    </subcellularLocation>
    <subcellularLocation>
        <location evidence="1">Nucleus</location>
    </subcellularLocation>
    <text evidence="1">Translocates to the nucleus upon cold and osmotic stress.</text>
</comment>
<comment type="similarity">
    <text evidence="6">Belongs to the class-II pyridoxal-phosphate-dependent aminotransferase family.</text>
</comment>
<feature type="transit peptide" description="Mitochondrion" evidence="4">
    <location>
        <begin position="1"/>
        <end position="21"/>
    </location>
</feature>
<feature type="chain" id="PRO_0000283039" description="2-amino-3-ketobutyrate coenzyme A ligase, mitochondrial">
    <location>
        <begin position="22"/>
        <end position="419"/>
    </location>
</feature>
<feature type="binding site" description="in other chain" evidence="3">
    <location>
        <begin position="134"/>
        <end position="135"/>
    </location>
    <ligand>
        <name>pyridoxal 5'-phosphate</name>
        <dbReference type="ChEBI" id="CHEBI:597326"/>
        <note>ligand shared between dimeric partners</note>
    </ligand>
</feature>
<feature type="binding site" evidence="3">
    <location>
        <position position="159"/>
    </location>
    <ligand>
        <name>substrate</name>
    </ligand>
</feature>
<feature type="binding site" description="in other chain" evidence="3">
    <location>
        <position position="206"/>
    </location>
    <ligand>
        <name>pyridoxal 5'-phosphate</name>
        <dbReference type="ChEBI" id="CHEBI:597326"/>
        <note>ligand shared between dimeric partners</note>
    </ligand>
</feature>
<feature type="binding site" description="in other chain" evidence="3">
    <location>
        <begin position="231"/>
        <end position="234"/>
    </location>
    <ligand>
        <name>pyridoxal 5'-phosphate</name>
        <dbReference type="ChEBI" id="CHEBI:597326"/>
        <note>ligand shared between dimeric partners</note>
    </ligand>
</feature>
<feature type="binding site" description="in other chain" evidence="3">
    <location>
        <begin position="262"/>
        <end position="265"/>
    </location>
    <ligand>
        <name>pyridoxal 5'-phosphate</name>
        <dbReference type="ChEBI" id="CHEBI:597326"/>
        <note>ligand shared between dimeric partners</note>
    </ligand>
</feature>
<feature type="binding site" evidence="3">
    <location>
        <begin position="295"/>
        <end position="296"/>
    </location>
    <ligand>
        <name>pyridoxal 5'-phosphate</name>
        <dbReference type="ChEBI" id="CHEBI:597326"/>
        <note>ligand shared between dimeric partners</note>
    </ligand>
</feature>
<feature type="binding site" evidence="3">
    <location>
        <position position="389"/>
    </location>
    <ligand>
        <name>substrate</name>
    </ligand>
</feature>
<feature type="modified residue" description="N6-acetyllysine; alternate" evidence="2">
    <location>
        <position position="45"/>
    </location>
</feature>
<feature type="modified residue" description="N6-succinyllysine; alternate" evidence="2">
    <location>
        <position position="45"/>
    </location>
</feature>
<feature type="modified residue" description="N6-acetyllysine; alternate" evidence="2">
    <location>
        <position position="187"/>
    </location>
</feature>
<feature type="modified residue" description="N6-succinyllysine; alternate" evidence="2">
    <location>
        <position position="187"/>
    </location>
</feature>
<feature type="modified residue" description="N6-(pyridoxal phosphate)lysine" evidence="4">
    <location>
        <position position="265"/>
    </location>
</feature>
<feature type="modified residue" description="N6-succinyllysine" evidence="2">
    <location>
        <position position="326"/>
    </location>
</feature>
<feature type="modified residue" description="N6-succinyllysine" evidence="2">
    <location>
        <position position="368"/>
    </location>
</feature>
<feature type="modified residue" description="N6-acetyllysine; alternate" evidence="2">
    <location>
        <position position="383"/>
    </location>
</feature>
<feature type="modified residue" description="N6-succinyllysine; alternate" evidence="2">
    <location>
        <position position="383"/>
    </location>
</feature>
<accession>Q0P5L8</accession>
<accession>Q9N1E8</accession>
<accession>Q9T2T7</accession>
<accession>Q9T2T8</accession>
<dbReference type="EC" id="2.3.1.29" evidence="4"/>
<dbReference type="EMBL" id="BC119870">
    <property type="protein sequence ID" value="AAI19871.1"/>
    <property type="molecule type" value="mRNA"/>
</dbReference>
<dbReference type="EMBL" id="AF195767">
    <property type="protein sequence ID" value="AAF44353.1"/>
    <property type="molecule type" value="mRNA"/>
</dbReference>
<dbReference type="RefSeq" id="NP_001068602.1">
    <property type="nucleotide sequence ID" value="NM_001075134.1"/>
</dbReference>
<dbReference type="SMR" id="Q0P5L8"/>
<dbReference type="FunCoup" id="Q0P5L8">
    <property type="interactions" value="187"/>
</dbReference>
<dbReference type="STRING" id="9913.ENSBTAP00000065253"/>
<dbReference type="PaxDb" id="9913-ENSBTAP00000011095"/>
<dbReference type="PeptideAtlas" id="Q0P5L8"/>
<dbReference type="GeneID" id="319141"/>
<dbReference type="KEGG" id="bta:319141"/>
<dbReference type="CTD" id="23464"/>
<dbReference type="eggNOG" id="KOG1359">
    <property type="taxonomic scope" value="Eukaryota"/>
</dbReference>
<dbReference type="HOGENOM" id="CLU_015846_11_0_1"/>
<dbReference type="InParanoid" id="Q0P5L8"/>
<dbReference type="OrthoDB" id="10263824at2759"/>
<dbReference type="TreeFam" id="TF105923"/>
<dbReference type="UniPathway" id="UPA00046">
    <property type="reaction ID" value="UER00506"/>
</dbReference>
<dbReference type="Proteomes" id="UP000009136">
    <property type="component" value="Unplaced"/>
</dbReference>
<dbReference type="GO" id="GO:0005739">
    <property type="term" value="C:mitochondrion"/>
    <property type="evidence" value="ECO:0000318"/>
    <property type="project" value="GO_Central"/>
</dbReference>
<dbReference type="GO" id="GO:0005634">
    <property type="term" value="C:nucleus"/>
    <property type="evidence" value="ECO:0007669"/>
    <property type="project" value="UniProtKB-SubCell"/>
</dbReference>
<dbReference type="GO" id="GO:0008890">
    <property type="term" value="F:glycine C-acetyltransferase activity"/>
    <property type="evidence" value="ECO:0007669"/>
    <property type="project" value="UniProtKB-EC"/>
</dbReference>
<dbReference type="GO" id="GO:0030170">
    <property type="term" value="F:pyridoxal phosphate binding"/>
    <property type="evidence" value="ECO:0007669"/>
    <property type="project" value="InterPro"/>
</dbReference>
<dbReference type="GO" id="GO:0009058">
    <property type="term" value="P:biosynthetic process"/>
    <property type="evidence" value="ECO:0007669"/>
    <property type="project" value="InterPro"/>
</dbReference>
<dbReference type="GO" id="GO:0019518">
    <property type="term" value="P:L-threonine catabolic process to glycine"/>
    <property type="evidence" value="ECO:0007669"/>
    <property type="project" value="UniProtKB-UniPathway"/>
</dbReference>
<dbReference type="CDD" id="cd06454">
    <property type="entry name" value="KBL_like"/>
    <property type="match status" value="1"/>
</dbReference>
<dbReference type="FunFam" id="3.90.1150.10:FF:000004">
    <property type="entry name" value="2-amino-3-ketobutyrate coenzyme A ligase"/>
    <property type="match status" value="1"/>
</dbReference>
<dbReference type="FunFam" id="3.40.640.10:FF:000006">
    <property type="entry name" value="5-aminolevulinate synthase, mitochondrial"/>
    <property type="match status" value="1"/>
</dbReference>
<dbReference type="Gene3D" id="3.90.1150.10">
    <property type="entry name" value="Aspartate Aminotransferase, domain 1"/>
    <property type="match status" value="1"/>
</dbReference>
<dbReference type="Gene3D" id="3.40.640.10">
    <property type="entry name" value="Type I PLP-dependent aspartate aminotransferase-like (Major domain)"/>
    <property type="match status" value="1"/>
</dbReference>
<dbReference type="HAMAP" id="MF_00985">
    <property type="entry name" value="2am3keto_CoA_ligase"/>
    <property type="match status" value="1"/>
</dbReference>
<dbReference type="InterPro" id="IPR011282">
    <property type="entry name" value="2am3keto_CoA_ligase"/>
</dbReference>
<dbReference type="InterPro" id="IPR001917">
    <property type="entry name" value="Aminotrans_II_pyridoxalP_BS"/>
</dbReference>
<dbReference type="InterPro" id="IPR004839">
    <property type="entry name" value="Aminotransferase_I/II_large"/>
</dbReference>
<dbReference type="InterPro" id="IPR050087">
    <property type="entry name" value="AON_synthase_class-II"/>
</dbReference>
<dbReference type="InterPro" id="IPR015424">
    <property type="entry name" value="PyrdxlP-dep_Trfase"/>
</dbReference>
<dbReference type="InterPro" id="IPR015421">
    <property type="entry name" value="PyrdxlP-dep_Trfase_major"/>
</dbReference>
<dbReference type="InterPro" id="IPR015422">
    <property type="entry name" value="PyrdxlP-dep_Trfase_small"/>
</dbReference>
<dbReference type="NCBIfam" id="TIGR01822">
    <property type="entry name" value="2am3keto_CoA"/>
    <property type="match status" value="1"/>
</dbReference>
<dbReference type="NCBIfam" id="NF005394">
    <property type="entry name" value="PRK06939.1"/>
    <property type="match status" value="1"/>
</dbReference>
<dbReference type="PANTHER" id="PTHR13693:SF102">
    <property type="entry name" value="2-AMINO-3-KETOBUTYRATE COENZYME A LIGASE, MITOCHONDRIAL"/>
    <property type="match status" value="1"/>
</dbReference>
<dbReference type="PANTHER" id="PTHR13693">
    <property type="entry name" value="CLASS II AMINOTRANSFERASE/8-AMINO-7-OXONONANOATE SYNTHASE"/>
    <property type="match status" value="1"/>
</dbReference>
<dbReference type="Pfam" id="PF00155">
    <property type="entry name" value="Aminotran_1_2"/>
    <property type="match status" value="1"/>
</dbReference>
<dbReference type="SUPFAM" id="SSF53383">
    <property type="entry name" value="PLP-dependent transferases"/>
    <property type="match status" value="1"/>
</dbReference>
<dbReference type="PROSITE" id="PS00599">
    <property type="entry name" value="AA_TRANSFER_CLASS_2"/>
    <property type="match status" value="1"/>
</dbReference>
<proteinExistence type="evidence at protein level"/>
<reference key="1">
    <citation type="submission" date="2006-08" db="EMBL/GenBank/DDBJ databases">
        <authorList>
            <consortium name="NIH - Mammalian Gene Collection (MGC) project"/>
        </authorList>
    </citation>
    <scope>NUCLEOTIDE SEQUENCE [LARGE SCALE MRNA]</scope>
    <source>
        <strain>Hereford</strain>
        <tissue>Thalamus</tissue>
    </source>
</reference>
<reference key="2">
    <citation type="journal article" date="1994" name="J. Biol. Chem.">
        <title>2-amino-3-ketobutyrate-CoA ligase from beef liver mitochondria. Purification and partial sequence.</title>
        <authorList>
            <person name="Tong H."/>
            <person name="Davis L."/>
        </authorList>
    </citation>
    <scope>PROTEIN SEQUENCE OF 22-42 AND 245-282</scope>
    <scope>PYRIDOXAL PHOSPHATE AT LYS-265</scope>
    <scope>FUNCTION</scope>
    <scope>CATALYTIC ACTIVITY</scope>
    <scope>SUBCELLULAR LOCATION</scope>
    <scope>COFACTOR</scope>
    <source>
        <tissue>Liver</tissue>
    </source>
</reference>
<reference key="3">
    <citation type="journal article" date="2000" name="Eur. J. Biochem.">
        <title>Molecular cloning of the human and murine 2-amino-3-ketobutyrate coenzyme A ligase cDNAs.</title>
        <authorList>
            <person name="Edgar A.J."/>
            <person name="Polak J.M."/>
        </authorList>
    </citation>
    <scope>NUCLEOTIDE SEQUENCE [MRNA] OF 26-287</scope>
    <source>
        <tissue>Liver</tissue>
    </source>
</reference>
<name>KBL_BOVIN</name>
<gene>
    <name type="primary">GCAT</name>
    <name evidence="5" type="synonym">AKBCL</name>
</gene>